<keyword id="KW-1003">Cell membrane</keyword>
<keyword id="KW-0342">GTP-binding</keyword>
<keyword id="KW-0378">Hydrolase</keyword>
<keyword id="KW-0472">Membrane</keyword>
<keyword id="KW-0547">Nucleotide-binding</keyword>
<keyword id="KW-0648">Protein biosynthesis</keyword>
<proteinExistence type="inferred from homology"/>
<dbReference type="EC" id="3.6.5.n1" evidence="1"/>
<dbReference type="EMBL" id="CP000962">
    <property type="protein sequence ID" value="ACA56467.1"/>
    <property type="molecule type" value="Genomic_DNA"/>
</dbReference>
<dbReference type="RefSeq" id="WP_012344335.1">
    <property type="nucleotide sequence ID" value="NC_010520.1"/>
</dbReference>
<dbReference type="SMR" id="B1KZP1"/>
<dbReference type="KEGG" id="cbl:CLK_2348"/>
<dbReference type="HOGENOM" id="CLU_009995_3_3_9"/>
<dbReference type="GO" id="GO:0005886">
    <property type="term" value="C:plasma membrane"/>
    <property type="evidence" value="ECO:0007669"/>
    <property type="project" value="UniProtKB-SubCell"/>
</dbReference>
<dbReference type="GO" id="GO:0005525">
    <property type="term" value="F:GTP binding"/>
    <property type="evidence" value="ECO:0007669"/>
    <property type="project" value="UniProtKB-UniRule"/>
</dbReference>
<dbReference type="GO" id="GO:0003924">
    <property type="term" value="F:GTPase activity"/>
    <property type="evidence" value="ECO:0007669"/>
    <property type="project" value="UniProtKB-UniRule"/>
</dbReference>
<dbReference type="GO" id="GO:0043022">
    <property type="term" value="F:ribosome binding"/>
    <property type="evidence" value="ECO:0007669"/>
    <property type="project" value="UniProtKB-UniRule"/>
</dbReference>
<dbReference type="GO" id="GO:0003746">
    <property type="term" value="F:translation elongation factor activity"/>
    <property type="evidence" value="ECO:0007669"/>
    <property type="project" value="UniProtKB-UniRule"/>
</dbReference>
<dbReference type="GO" id="GO:0045727">
    <property type="term" value="P:positive regulation of translation"/>
    <property type="evidence" value="ECO:0007669"/>
    <property type="project" value="UniProtKB-UniRule"/>
</dbReference>
<dbReference type="CDD" id="cd03699">
    <property type="entry name" value="EF4_II"/>
    <property type="match status" value="1"/>
</dbReference>
<dbReference type="CDD" id="cd16260">
    <property type="entry name" value="EF4_III"/>
    <property type="match status" value="1"/>
</dbReference>
<dbReference type="CDD" id="cd01890">
    <property type="entry name" value="LepA"/>
    <property type="match status" value="1"/>
</dbReference>
<dbReference type="CDD" id="cd03709">
    <property type="entry name" value="lepA_C"/>
    <property type="match status" value="1"/>
</dbReference>
<dbReference type="FunFam" id="3.40.50.300:FF:000078">
    <property type="entry name" value="Elongation factor 4"/>
    <property type="match status" value="1"/>
</dbReference>
<dbReference type="FunFam" id="2.40.30.10:FF:000015">
    <property type="entry name" value="Translation factor GUF1, mitochondrial"/>
    <property type="match status" value="1"/>
</dbReference>
<dbReference type="FunFam" id="3.30.70.240:FF:000007">
    <property type="entry name" value="Translation factor GUF1, mitochondrial"/>
    <property type="match status" value="1"/>
</dbReference>
<dbReference type="FunFam" id="3.30.70.2570:FF:000001">
    <property type="entry name" value="Translation factor GUF1, mitochondrial"/>
    <property type="match status" value="1"/>
</dbReference>
<dbReference type="FunFam" id="3.30.70.870:FF:000004">
    <property type="entry name" value="Translation factor GUF1, mitochondrial"/>
    <property type="match status" value="1"/>
</dbReference>
<dbReference type="Gene3D" id="3.30.70.240">
    <property type="match status" value="1"/>
</dbReference>
<dbReference type="Gene3D" id="3.30.70.2570">
    <property type="entry name" value="Elongation factor 4, C-terminal domain"/>
    <property type="match status" value="1"/>
</dbReference>
<dbReference type="Gene3D" id="3.30.70.870">
    <property type="entry name" value="Elongation Factor G (Translational Gtpase), domain 3"/>
    <property type="match status" value="1"/>
</dbReference>
<dbReference type="Gene3D" id="3.40.50.300">
    <property type="entry name" value="P-loop containing nucleotide triphosphate hydrolases"/>
    <property type="match status" value="1"/>
</dbReference>
<dbReference type="Gene3D" id="2.40.30.10">
    <property type="entry name" value="Translation factors"/>
    <property type="match status" value="1"/>
</dbReference>
<dbReference type="HAMAP" id="MF_00071">
    <property type="entry name" value="LepA"/>
    <property type="match status" value="1"/>
</dbReference>
<dbReference type="InterPro" id="IPR006297">
    <property type="entry name" value="EF-4"/>
</dbReference>
<dbReference type="InterPro" id="IPR035647">
    <property type="entry name" value="EFG_III/V"/>
</dbReference>
<dbReference type="InterPro" id="IPR000640">
    <property type="entry name" value="EFG_V-like"/>
</dbReference>
<dbReference type="InterPro" id="IPR004161">
    <property type="entry name" value="EFTu-like_2"/>
</dbReference>
<dbReference type="InterPro" id="IPR031157">
    <property type="entry name" value="G_TR_CS"/>
</dbReference>
<dbReference type="InterPro" id="IPR038363">
    <property type="entry name" value="LepA_C_sf"/>
</dbReference>
<dbReference type="InterPro" id="IPR013842">
    <property type="entry name" value="LepA_CTD"/>
</dbReference>
<dbReference type="InterPro" id="IPR035654">
    <property type="entry name" value="LepA_IV"/>
</dbReference>
<dbReference type="InterPro" id="IPR027417">
    <property type="entry name" value="P-loop_NTPase"/>
</dbReference>
<dbReference type="InterPro" id="IPR005225">
    <property type="entry name" value="Small_GTP-bd"/>
</dbReference>
<dbReference type="InterPro" id="IPR000795">
    <property type="entry name" value="T_Tr_GTP-bd_dom"/>
</dbReference>
<dbReference type="NCBIfam" id="TIGR01393">
    <property type="entry name" value="lepA"/>
    <property type="match status" value="1"/>
</dbReference>
<dbReference type="NCBIfam" id="TIGR00231">
    <property type="entry name" value="small_GTP"/>
    <property type="match status" value="1"/>
</dbReference>
<dbReference type="PANTHER" id="PTHR43512:SF4">
    <property type="entry name" value="TRANSLATION FACTOR GUF1 HOMOLOG, CHLOROPLASTIC"/>
    <property type="match status" value="1"/>
</dbReference>
<dbReference type="PANTHER" id="PTHR43512">
    <property type="entry name" value="TRANSLATION FACTOR GUF1-RELATED"/>
    <property type="match status" value="1"/>
</dbReference>
<dbReference type="Pfam" id="PF00679">
    <property type="entry name" value="EFG_C"/>
    <property type="match status" value="1"/>
</dbReference>
<dbReference type="Pfam" id="PF00009">
    <property type="entry name" value="GTP_EFTU"/>
    <property type="match status" value="1"/>
</dbReference>
<dbReference type="Pfam" id="PF03144">
    <property type="entry name" value="GTP_EFTU_D2"/>
    <property type="match status" value="1"/>
</dbReference>
<dbReference type="Pfam" id="PF06421">
    <property type="entry name" value="LepA_C"/>
    <property type="match status" value="1"/>
</dbReference>
<dbReference type="PRINTS" id="PR00315">
    <property type="entry name" value="ELONGATNFCT"/>
</dbReference>
<dbReference type="SMART" id="SM00838">
    <property type="entry name" value="EFG_C"/>
    <property type="match status" value="1"/>
</dbReference>
<dbReference type="SUPFAM" id="SSF54980">
    <property type="entry name" value="EF-G C-terminal domain-like"/>
    <property type="match status" value="2"/>
</dbReference>
<dbReference type="SUPFAM" id="SSF52540">
    <property type="entry name" value="P-loop containing nucleoside triphosphate hydrolases"/>
    <property type="match status" value="1"/>
</dbReference>
<dbReference type="PROSITE" id="PS00301">
    <property type="entry name" value="G_TR_1"/>
    <property type="match status" value="1"/>
</dbReference>
<dbReference type="PROSITE" id="PS51722">
    <property type="entry name" value="G_TR_2"/>
    <property type="match status" value="1"/>
</dbReference>
<evidence type="ECO:0000255" key="1">
    <source>
        <dbReference type="HAMAP-Rule" id="MF_00071"/>
    </source>
</evidence>
<gene>
    <name evidence="1" type="primary">lepA</name>
    <name type="ordered locus">CLK_2348</name>
</gene>
<sequence>MQSERQKYIRNFSIVAHIDHGKSTLADRLIEATGTLTEREMDTQVLDNMDLEKERGITIKSQAVRLIYKRDTGEEYTLNLIDTPGHVDFNYEVSRSLAACEGAILVVDATQGIQAQTLANCYLALDNDLEIVPVINKIDLPSARPEEVKQEIEDVIGIEAEDAPLVSAKTGLNIKDALEAIVSKVPAPYGDEKAPLKALIFDSYYDSYKGVVCHIRVKEGTIREGTEIKLMNTGKVYEVVEVGVFVPNYMPVDELKAGDVGYVTASIKNVRDARVGDTITEAKRSANEALSGYRPAVPMVFSGIYPVDGAKYEELKEALEKLQVNDAALSFEPETSIALGFGFRCGFLGLLHMDIIQERLEREFNLDIITTAPSVIYKITKTDGTLIELTNPTNMPSPSEIKLMEEPIVKSSIITPSDYVGAVMDLAQNRRGIFKDMQYLDTTRVSLNYEIPLNEIIYDFFDALKSRTRGYASFDYELIGYKDADLVKLDILLNADVVDALSMIVPRERAYAKGRNMAQKLKEIIPRQMFEIPIQAAVGAKIIARETIKAMRKDVLAKCYGGDISRKRKLLEKQKEGKKRMRQVGSVEVPQEAFMAVLKTEE</sequence>
<comment type="function">
    <text evidence="1">Required for accurate and efficient protein synthesis under certain stress conditions. May act as a fidelity factor of the translation reaction, by catalyzing a one-codon backward translocation of tRNAs on improperly translocated ribosomes. Back-translocation proceeds from a post-translocation (POST) complex to a pre-translocation (PRE) complex, thus giving elongation factor G a second chance to translocate the tRNAs correctly. Binds to ribosomes in a GTP-dependent manner.</text>
</comment>
<comment type="catalytic activity">
    <reaction evidence="1">
        <text>GTP + H2O = GDP + phosphate + H(+)</text>
        <dbReference type="Rhea" id="RHEA:19669"/>
        <dbReference type="ChEBI" id="CHEBI:15377"/>
        <dbReference type="ChEBI" id="CHEBI:15378"/>
        <dbReference type="ChEBI" id="CHEBI:37565"/>
        <dbReference type="ChEBI" id="CHEBI:43474"/>
        <dbReference type="ChEBI" id="CHEBI:58189"/>
        <dbReference type="EC" id="3.6.5.n1"/>
    </reaction>
</comment>
<comment type="subcellular location">
    <subcellularLocation>
        <location evidence="1">Cell membrane</location>
        <topology evidence="1">Peripheral membrane protein</topology>
        <orientation evidence="1">Cytoplasmic side</orientation>
    </subcellularLocation>
</comment>
<comment type="similarity">
    <text evidence="1">Belongs to the TRAFAC class translation factor GTPase superfamily. Classic translation factor GTPase family. LepA subfamily.</text>
</comment>
<accession>B1KZP1</accession>
<protein>
    <recommendedName>
        <fullName evidence="1">Elongation factor 4</fullName>
        <shortName evidence="1">EF-4</shortName>
        <ecNumber evidence="1">3.6.5.n1</ecNumber>
    </recommendedName>
    <alternativeName>
        <fullName evidence="1">Ribosomal back-translocase LepA</fullName>
    </alternativeName>
</protein>
<organism>
    <name type="scientific">Clostridium botulinum (strain Loch Maree / Type A3)</name>
    <dbReference type="NCBI Taxonomy" id="498214"/>
    <lineage>
        <taxon>Bacteria</taxon>
        <taxon>Bacillati</taxon>
        <taxon>Bacillota</taxon>
        <taxon>Clostridia</taxon>
        <taxon>Eubacteriales</taxon>
        <taxon>Clostridiaceae</taxon>
        <taxon>Clostridium</taxon>
    </lineage>
</organism>
<feature type="chain" id="PRO_1000092388" description="Elongation factor 4">
    <location>
        <begin position="1"/>
        <end position="602"/>
    </location>
</feature>
<feature type="domain" description="tr-type G">
    <location>
        <begin position="7"/>
        <end position="189"/>
    </location>
</feature>
<feature type="binding site" evidence="1">
    <location>
        <begin position="19"/>
        <end position="24"/>
    </location>
    <ligand>
        <name>GTP</name>
        <dbReference type="ChEBI" id="CHEBI:37565"/>
    </ligand>
</feature>
<feature type="binding site" evidence="1">
    <location>
        <begin position="136"/>
        <end position="139"/>
    </location>
    <ligand>
        <name>GTP</name>
        <dbReference type="ChEBI" id="CHEBI:37565"/>
    </ligand>
</feature>
<name>LEPA_CLOBM</name>
<reference key="1">
    <citation type="journal article" date="2007" name="PLoS ONE">
        <title>Analysis of the neurotoxin complex genes in Clostridium botulinum A1-A4 and B1 strains: BoNT/A3, /Ba4 and /B1 clusters are located within plasmids.</title>
        <authorList>
            <person name="Smith T.J."/>
            <person name="Hill K.K."/>
            <person name="Foley B.T."/>
            <person name="Detter J.C."/>
            <person name="Munk A.C."/>
            <person name="Bruce D.C."/>
            <person name="Doggett N.A."/>
            <person name="Smith L.A."/>
            <person name="Marks J.D."/>
            <person name="Xie G."/>
            <person name="Brettin T.S."/>
        </authorList>
    </citation>
    <scope>NUCLEOTIDE SEQUENCE [LARGE SCALE GENOMIC DNA]</scope>
    <source>
        <strain>Loch Maree / Type A3</strain>
    </source>
</reference>